<sequence>MLDQDLDDIHPLFQGAPQTTEFKKLRKRIVRYTREAVEQYGMVERREDGSLPKWLVCLSGGKDSYTLLAVLYELKWRGLLPVDLLACNLDQGQPGFPATVLPEFLEKMQVPHRIEYQDTYSIVMDKVPQGRTYCALCSRLRRGNLYRIAREEGCSAVVLGHHRDDILETFFMNLFHGGRLATMPPKLVNEEGDLFVFRPLAHVAEADCEKFARAMNYPIIPCDLCGSQDGLQRQQVKQILDTWESNSPGRRQVMFRALMNARPSHLLDPKLFDFTGLALKNIDNSTETEEIPELR</sequence>
<organism>
    <name type="scientific">Ruegeria sp. (strain TM1040)</name>
    <name type="common">Silicibacter sp.</name>
    <dbReference type="NCBI Taxonomy" id="292414"/>
    <lineage>
        <taxon>Bacteria</taxon>
        <taxon>Pseudomonadati</taxon>
        <taxon>Pseudomonadota</taxon>
        <taxon>Alphaproteobacteria</taxon>
        <taxon>Rhodobacterales</taxon>
        <taxon>Roseobacteraceae</taxon>
        <taxon>Ruegeria</taxon>
    </lineage>
</organism>
<name>TTCA_RUEST</name>
<reference key="1">
    <citation type="submission" date="2006-05" db="EMBL/GenBank/DDBJ databases">
        <title>Complete sequence of chromosome of Silicibacter sp. TM1040.</title>
        <authorList>
            <consortium name="US DOE Joint Genome Institute"/>
            <person name="Copeland A."/>
            <person name="Lucas S."/>
            <person name="Lapidus A."/>
            <person name="Barry K."/>
            <person name="Detter J.C."/>
            <person name="Glavina del Rio T."/>
            <person name="Hammon N."/>
            <person name="Israni S."/>
            <person name="Dalin E."/>
            <person name="Tice H."/>
            <person name="Pitluck S."/>
            <person name="Brettin T."/>
            <person name="Bruce D."/>
            <person name="Han C."/>
            <person name="Tapia R."/>
            <person name="Goodwin L."/>
            <person name="Thompson L.S."/>
            <person name="Gilna P."/>
            <person name="Schmutz J."/>
            <person name="Larimer F."/>
            <person name="Land M."/>
            <person name="Hauser L."/>
            <person name="Kyrpides N."/>
            <person name="Kim E."/>
            <person name="Belas R."/>
            <person name="Moran M.A."/>
            <person name="Buchan A."/>
            <person name="Gonzalez J.M."/>
            <person name="Schell M.A."/>
            <person name="Sun F."/>
            <person name="Richardson P."/>
        </authorList>
    </citation>
    <scope>NUCLEOTIDE SEQUENCE [LARGE SCALE GENOMIC DNA]</scope>
    <source>
        <strain>TM1040</strain>
    </source>
</reference>
<gene>
    <name evidence="1" type="primary">ttcA</name>
    <name type="ordered locus">TM1040_0309</name>
</gene>
<evidence type="ECO:0000255" key="1">
    <source>
        <dbReference type="HAMAP-Rule" id="MF_01850"/>
    </source>
</evidence>
<comment type="function">
    <text evidence="1">Catalyzes the ATP-dependent 2-thiolation of cytidine in position 32 of tRNA, to form 2-thiocytidine (s(2)C32). The sulfur atoms are provided by the cysteine/cysteine desulfurase (IscS) system.</text>
</comment>
<comment type="catalytic activity">
    <reaction evidence="1">
        <text>cytidine(32) in tRNA + S-sulfanyl-L-cysteinyl-[cysteine desulfurase] + AH2 + ATP = 2-thiocytidine(32) in tRNA + L-cysteinyl-[cysteine desulfurase] + A + AMP + diphosphate + H(+)</text>
        <dbReference type="Rhea" id="RHEA:57048"/>
        <dbReference type="Rhea" id="RHEA-COMP:10288"/>
        <dbReference type="Rhea" id="RHEA-COMP:12157"/>
        <dbReference type="Rhea" id="RHEA-COMP:12158"/>
        <dbReference type="Rhea" id="RHEA-COMP:14821"/>
        <dbReference type="ChEBI" id="CHEBI:13193"/>
        <dbReference type="ChEBI" id="CHEBI:15378"/>
        <dbReference type="ChEBI" id="CHEBI:17499"/>
        <dbReference type="ChEBI" id="CHEBI:29950"/>
        <dbReference type="ChEBI" id="CHEBI:30616"/>
        <dbReference type="ChEBI" id="CHEBI:33019"/>
        <dbReference type="ChEBI" id="CHEBI:61963"/>
        <dbReference type="ChEBI" id="CHEBI:82748"/>
        <dbReference type="ChEBI" id="CHEBI:141453"/>
        <dbReference type="ChEBI" id="CHEBI:456215"/>
    </reaction>
    <physiologicalReaction direction="left-to-right" evidence="1">
        <dbReference type="Rhea" id="RHEA:57049"/>
    </physiologicalReaction>
</comment>
<comment type="cofactor">
    <cofactor evidence="1">
        <name>Mg(2+)</name>
        <dbReference type="ChEBI" id="CHEBI:18420"/>
    </cofactor>
</comment>
<comment type="cofactor">
    <cofactor evidence="1">
        <name>[4Fe-4S] cluster</name>
        <dbReference type="ChEBI" id="CHEBI:49883"/>
    </cofactor>
    <text evidence="1">Binds 1 [4Fe-4S] cluster per subunit. The cluster is chelated by three Cys residues, the fourth Fe has a free coordination site that may bind a sulfur atom transferred from the persulfide of IscS.</text>
</comment>
<comment type="pathway">
    <text evidence="1">tRNA modification.</text>
</comment>
<comment type="subunit">
    <text evidence="1">Homodimer.</text>
</comment>
<comment type="subcellular location">
    <subcellularLocation>
        <location evidence="1">Cytoplasm</location>
    </subcellularLocation>
</comment>
<comment type="miscellaneous">
    <text evidence="1">The thiolation reaction likely consists of two steps: a first activation step by ATP to form an adenylated intermediate of the target base of tRNA, and a second nucleophilic substitution step of the sulfur (S) atom supplied by the hydrosulfide attached to the Fe-S cluster.</text>
</comment>
<comment type="similarity">
    <text evidence="1">Belongs to the TtcA family.</text>
</comment>
<feature type="chain" id="PRO_0000348855" description="tRNA-cytidine(32) 2-sulfurtransferase">
    <location>
        <begin position="1"/>
        <end position="295"/>
    </location>
</feature>
<feature type="short sequence motif" description="PP-loop motif" evidence="1">
    <location>
        <begin position="59"/>
        <end position="64"/>
    </location>
</feature>
<feature type="binding site" evidence="1">
    <location>
        <position position="134"/>
    </location>
    <ligand>
        <name>[4Fe-4S] cluster</name>
        <dbReference type="ChEBI" id="CHEBI:49883"/>
    </ligand>
</feature>
<feature type="binding site" evidence="1">
    <location>
        <position position="137"/>
    </location>
    <ligand>
        <name>[4Fe-4S] cluster</name>
        <dbReference type="ChEBI" id="CHEBI:49883"/>
    </ligand>
</feature>
<feature type="binding site" evidence="1">
    <location>
        <position position="225"/>
    </location>
    <ligand>
        <name>[4Fe-4S] cluster</name>
        <dbReference type="ChEBI" id="CHEBI:49883"/>
    </ligand>
</feature>
<dbReference type="EC" id="2.8.1.-" evidence="1"/>
<dbReference type="EMBL" id="CP000377">
    <property type="protein sequence ID" value="ABF63042.1"/>
    <property type="molecule type" value="Genomic_DNA"/>
</dbReference>
<dbReference type="RefSeq" id="WP_011537658.1">
    <property type="nucleotide sequence ID" value="NC_008044.1"/>
</dbReference>
<dbReference type="SMR" id="Q1GJX4"/>
<dbReference type="STRING" id="292414.TM1040_0309"/>
<dbReference type="KEGG" id="sit:TM1040_0309"/>
<dbReference type="eggNOG" id="COG0037">
    <property type="taxonomic scope" value="Bacteria"/>
</dbReference>
<dbReference type="HOGENOM" id="CLU_026481_0_0_5"/>
<dbReference type="OrthoDB" id="9801054at2"/>
<dbReference type="Proteomes" id="UP000000636">
    <property type="component" value="Chromosome"/>
</dbReference>
<dbReference type="GO" id="GO:0005737">
    <property type="term" value="C:cytoplasm"/>
    <property type="evidence" value="ECO:0007669"/>
    <property type="project" value="UniProtKB-SubCell"/>
</dbReference>
<dbReference type="GO" id="GO:0051539">
    <property type="term" value="F:4 iron, 4 sulfur cluster binding"/>
    <property type="evidence" value="ECO:0007669"/>
    <property type="project" value="UniProtKB-UniRule"/>
</dbReference>
<dbReference type="GO" id="GO:0005524">
    <property type="term" value="F:ATP binding"/>
    <property type="evidence" value="ECO:0007669"/>
    <property type="project" value="UniProtKB-UniRule"/>
</dbReference>
<dbReference type="GO" id="GO:0000287">
    <property type="term" value="F:magnesium ion binding"/>
    <property type="evidence" value="ECO:0007669"/>
    <property type="project" value="UniProtKB-UniRule"/>
</dbReference>
<dbReference type="GO" id="GO:0016783">
    <property type="term" value="F:sulfurtransferase activity"/>
    <property type="evidence" value="ECO:0007669"/>
    <property type="project" value="UniProtKB-UniRule"/>
</dbReference>
<dbReference type="GO" id="GO:0000049">
    <property type="term" value="F:tRNA binding"/>
    <property type="evidence" value="ECO:0007669"/>
    <property type="project" value="UniProtKB-KW"/>
</dbReference>
<dbReference type="GO" id="GO:0034227">
    <property type="term" value="P:tRNA thio-modification"/>
    <property type="evidence" value="ECO:0007669"/>
    <property type="project" value="UniProtKB-UniRule"/>
</dbReference>
<dbReference type="CDD" id="cd24138">
    <property type="entry name" value="TtcA-like"/>
    <property type="match status" value="1"/>
</dbReference>
<dbReference type="Gene3D" id="3.40.50.620">
    <property type="entry name" value="HUPs"/>
    <property type="match status" value="1"/>
</dbReference>
<dbReference type="HAMAP" id="MF_01850">
    <property type="entry name" value="TtcA"/>
    <property type="match status" value="1"/>
</dbReference>
<dbReference type="InterPro" id="IPR014729">
    <property type="entry name" value="Rossmann-like_a/b/a_fold"/>
</dbReference>
<dbReference type="InterPro" id="IPR011063">
    <property type="entry name" value="TilS/TtcA_N"/>
</dbReference>
<dbReference type="InterPro" id="IPR012089">
    <property type="entry name" value="tRNA_Cyd_32_2_STrfase"/>
</dbReference>
<dbReference type="InterPro" id="IPR035107">
    <property type="entry name" value="tRNA_thiolation_TtcA_Ctu1"/>
</dbReference>
<dbReference type="NCBIfam" id="NF007972">
    <property type="entry name" value="PRK10696.1"/>
    <property type="match status" value="1"/>
</dbReference>
<dbReference type="PANTHER" id="PTHR43686:SF1">
    <property type="entry name" value="AMINOTRAN_5 DOMAIN-CONTAINING PROTEIN"/>
    <property type="match status" value="1"/>
</dbReference>
<dbReference type="PANTHER" id="PTHR43686">
    <property type="entry name" value="SULFURTRANSFERASE-RELATED"/>
    <property type="match status" value="1"/>
</dbReference>
<dbReference type="Pfam" id="PF01171">
    <property type="entry name" value="ATP_bind_3"/>
    <property type="match status" value="1"/>
</dbReference>
<dbReference type="PIRSF" id="PIRSF004976">
    <property type="entry name" value="ATPase_YdaO"/>
    <property type="match status" value="1"/>
</dbReference>
<dbReference type="SUPFAM" id="SSF52402">
    <property type="entry name" value="Adenine nucleotide alpha hydrolases-like"/>
    <property type="match status" value="1"/>
</dbReference>
<accession>Q1GJX4</accession>
<proteinExistence type="inferred from homology"/>
<keyword id="KW-0004">4Fe-4S</keyword>
<keyword id="KW-0067">ATP-binding</keyword>
<keyword id="KW-0963">Cytoplasm</keyword>
<keyword id="KW-0408">Iron</keyword>
<keyword id="KW-0411">Iron-sulfur</keyword>
<keyword id="KW-0460">Magnesium</keyword>
<keyword id="KW-0479">Metal-binding</keyword>
<keyword id="KW-0547">Nucleotide-binding</keyword>
<keyword id="KW-1185">Reference proteome</keyword>
<keyword id="KW-0694">RNA-binding</keyword>
<keyword id="KW-0808">Transferase</keyword>
<keyword id="KW-0819">tRNA processing</keyword>
<keyword id="KW-0820">tRNA-binding</keyword>
<protein>
    <recommendedName>
        <fullName evidence="1">tRNA-cytidine(32) 2-sulfurtransferase</fullName>
        <ecNumber evidence="1">2.8.1.-</ecNumber>
    </recommendedName>
    <alternativeName>
        <fullName evidence="1">Two-thiocytidine biosynthesis protein A</fullName>
    </alternativeName>
    <alternativeName>
        <fullName evidence="1">tRNA 2-thiocytidine biosynthesis protein TtcA</fullName>
    </alternativeName>
</protein>